<reference key="1">
    <citation type="journal article" date="2001" name="Lancet">
        <title>Whole genome sequencing of meticillin-resistant Staphylococcus aureus.</title>
        <authorList>
            <person name="Kuroda M."/>
            <person name="Ohta T."/>
            <person name="Uchiyama I."/>
            <person name="Baba T."/>
            <person name="Yuzawa H."/>
            <person name="Kobayashi I."/>
            <person name="Cui L."/>
            <person name="Oguchi A."/>
            <person name="Aoki K."/>
            <person name="Nagai Y."/>
            <person name="Lian J.-Q."/>
            <person name="Ito T."/>
            <person name="Kanamori M."/>
            <person name="Matsumaru H."/>
            <person name="Maruyama A."/>
            <person name="Murakami H."/>
            <person name="Hosoyama A."/>
            <person name="Mizutani-Ui Y."/>
            <person name="Takahashi N.K."/>
            <person name="Sawano T."/>
            <person name="Inoue R."/>
            <person name="Kaito C."/>
            <person name="Sekimizu K."/>
            <person name="Hirakawa H."/>
            <person name="Kuhara S."/>
            <person name="Goto S."/>
            <person name="Yabuzaki J."/>
            <person name="Kanehisa M."/>
            <person name="Yamashita A."/>
            <person name="Oshima K."/>
            <person name="Furuya K."/>
            <person name="Yoshino C."/>
            <person name="Shiba T."/>
            <person name="Hattori M."/>
            <person name="Ogasawara N."/>
            <person name="Hayashi H."/>
            <person name="Hiramatsu K."/>
        </authorList>
    </citation>
    <scope>NUCLEOTIDE SEQUENCE [LARGE SCALE GENOMIC DNA]</scope>
    <source>
        <strain>N315</strain>
    </source>
</reference>
<reference key="2">
    <citation type="submission" date="2007-10" db="UniProtKB">
        <title>Shotgun proteomic analysis of total and membrane protein extracts of S. aureus strain N315.</title>
        <authorList>
            <person name="Vaezzadeh A.R."/>
            <person name="Deshusses J."/>
            <person name="Lescuyer P."/>
            <person name="Hochstrasser D.F."/>
        </authorList>
    </citation>
    <scope>IDENTIFICATION BY MASS SPECTROMETRY [LARGE SCALE ANALYSIS]</scope>
    <source>
        <strain>N315</strain>
    </source>
</reference>
<protein>
    <recommendedName>
        <fullName>Putative zinc metalloprotease SA1105</fullName>
        <ecNumber>3.4.24.-</ecNumber>
    </recommendedName>
</protein>
<evidence type="ECO:0000255" key="1"/>
<evidence type="ECO:0000255" key="2">
    <source>
        <dbReference type="PROSITE-ProRule" id="PRU10095"/>
    </source>
</evidence>
<evidence type="ECO:0000305" key="3"/>
<sequence>MSYLVTIIAFIIVFGVLVTVHEYGHMFFAKRAGIMCPEFAIGMGPKIFSFRKNETLYTIRLLPVGGYVRMAGDGLEEPPVEPGMNVKIKLNEENEITHIILDDHHKFQQIEAIEVKKCDFKDDLFIEGITAYDNERHHFKIARKSFFVENGSLVQIAPRDRQFAHKKPWPKFLTLFAGPLFNFILALVLFIGLAYYQGTPTSTVEQVADKYPAQQAGLQKGDKIVQIGKYKISEFDDVDKALDKVKDNKTTVKFERDGKTKSVELTPKKTERKLTKVSSETKYVLGFQPASEHTLFKPIVYGFESFLKGSTLIFTAVVGMLASIFTGGFSFDMLNGPVGIYHNVDSVVKAGIISLIGYTALLSVNLGIMNLIPIPALDGGRILFVIYEAIFRKPVNKKAETTIIAIGAIFMVVIMILVTWNDIRRYFL</sequence>
<comment type="cofactor">
    <cofactor evidence="3">
        <name>Zn(2+)</name>
        <dbReference type="ChEBI" id="CHEBI:29105"/>
    </cofactor>
</comment>
<comment type="subcellular location">
    <subcellularLocation>
        <location evidence="3">Cell membrane</location>
        <topology evidence="3">Multi-pass membrane protein</topology>
    </subcellularLocation>
</comment>
<comment type="similarity">
    <text evidence="3">Belongs to the peptidase M50B family.</text>
</comment>
<gene>
    <name type="ordered locus">SA1105</name>
</gene>
<accession>P63333</accession>
<accession>Q99UL0</accession>
<dbReference type="EC" id="3.4.24.-"/>
<dbReference type="EMBL" id="BA000018">
    <property type="protein sequence ID" value="BAB42357.1"/>
    <property type="molecule type" value="Genomic_DNA"/>
</dbReference>
<dbReference type="PIR" id="A89900">
    <property type="entry name" value="A89900"/>
</dbReference>
<dbReference type="SMR" id="P63333"/>
<dbReference type="EnsemblBacteria" id="BAB42357">
    <property type="protein sequence ID" value="BAB42357"/>
    <property type="gene ID" value="BAB42357"/>
</dbReference>
<dbReference type="KEGG" id="sau:SA1105"/>
<dbReference type="HOGENOM" id="CLU_025778_1_0_9"/>
<dbReference type="GO" id="GO:0005886">
    <property type="term" value="C:plasma membrane"/>
    <property type="evidence" value="ECO:0007669"/>
    <property type="project" value="UniProtKB-SubCell"/>
</dbReference>
<dbReference type="GO" id="GO:0046872">
    <property type="term" value="F:metal ion binding"/>
    <property type="evidence" value="ECO:0007669"/>
    <property type="project" value="UniProtKB-KW"/>
</dbReference>
<dbReference type="GO" id="GO:0004222">
    <property type="term" value="F:metalloendopeptidase activity"/>
    <property type="evidence" value="ECO:0007669"/>
    <property type="project" value="InterPro"/>
</dbReference>
<dbReference type="GO" id="GO:0006508">
    <property type="term" value="P:proteolysis"/>
    <property type="evidence" value="ECO:0007669"/>
    <property type="project" value="UniProtKB-KW"/>
</dbReference>
<dbReference type="CDD" id="cd23081">
    <property type="entry name" value="cpPDZ_EcRseP-like"/>
    <property type="match status" value="1"/>
</dbReference>
<dbReference type="CDD" id="cd06163">
    <property type="entry name" value="S2P-M50_PDZ_RseP-like"/>
    <property type="match status" value="1"/>
</dbReference>
<dbReference type="Gene3D" id="2.30.42.10">
    <property type="match status" value="1"/>
</dbReference>
<dbReference type="InterPro" id="IPR001478">
    <property type="entry name" value="PDZ"/>
</dbReference>
<dbReference type="InterPro" id="IPR036034">
    <property type="entry name" value="PDZ_sf"/>
</dbReference>
<dbReference type="InterPro" id="IPR004387">
    <property type="entry name" value="Pept_M50_Zn"/>
</dbReference>
<dbReference type="InterPro" id="IPR008915">
    <property type="entry name" value="Peptidase_M50"/>
</dbReference>
<dbReference type="NCBIfam" id="TIGR00054">
    <property type="entry name" value="RIP metalloprotease RseP"/>
    <property type="match status" value="1"/>
</dbReference>
<dbReference type="PANTHER" id="PTHR42837:SF2">
    <property type="entry name" value="MEMBRANE METALLOPROTEASE ARASP2, CHLOROPLASTIC-RELATED"/>
    <property type="match status" value="1"/>
</dbReference>
<dbReference type="PANTHER" id="PTHR42837">
    <property type="entry name" value="REGULATOR OF SIGMA-E PROTEASE RSEP"/>
    <property type="match status" value="1"/>
</dbReference>
<dbReference type="Pfam" id="PF13180">
    <property type="entry name" value="PDZ_2"/>
    <property type="match status" value="1"/>
</dbReference>
<dbReference type="Pfam" id="PF02163">
    <property type="entry name" value="Peptidase_M50"/>
    <property type="match status" value="1"/>
</dbReference>
<dbReference type="SUPFAM" id="SSF50156">
    <property type="entry name" value="PDZ domain-like"/>
    <property type="match status" value="1"/>
</dbReference>
<dbReference type="PROSITE" id="PS00142">
    <property type="entry name" value="ZINC_PROTEASE"/>
    <property type="match status" value="1"/>
</dbReference>
<organism>
    <name type="scientific">Staphylococcus aureus (strain N315)</name>
    <dbReference type="NCBI Taxonomy" id="158879"/>
    <lineage>
        <taxon>Bacteria</taxon>
        <taxon>Bacillati</taxon>
        <taxon>Bacillota</taxon>
        <taxon>Bacilli</taxon>
        <taxon>Bacillales</taxon>
        <taxon>Staphylococcaceae</taxon>
        <taxon>Staphylococcus</taxon>
    </lineage>
</organism>
<name>Y1105_STAAN</name>
<feature type="chain" id="PRO_0000088461" description="Putative zinc metalloprotease SA1105">
    <location>
        <begin position="1"/>
        <end position="428"/>
    </location>
</feature>
<feature type="transmembrane region" description="Helical" evidence="1">
    <location>
        <begin position="172"/>
        <end position="194"/>
    </location>
</feature>
<feature type="transmembrane region" description="Helical" evidence="1">
    <location>
        <begin position="309"/>
        <end position="331"/>
    </location>
</feature>
<feature type="transmembrane region" description="Helical" evidence="1">
    <location>
        <begin position="352"/>
        <end position="374"/>
    </location>
</feature>
<feature type="transmembrane region" description="Helical" evidence="1">
    <location>
        <begin position="401"/>
        <end position="420"/>
    </location>
</feature>
<feature type="domain" description="PDZ">
    <location>
        <begin position="186"/>
        <end position="269"/>
    </location>
</feature>
<feature type="active site" evidence="2">
    <location>
        <position position="22"/>
    </location>
</feature>
<feature type="binding site" evidence="2">
    <location>
        <position position="21"/>
    </location>
    <ligand>
        <name>Zn(2+)</name>
        <dbReference type="ChEBI" id="CHEBI:29105"/>
        <note>catalytic</note>
    </ligand>
</feature>
<feature type="binding site" evidence="2">
    <location>
        <position position="25"/>
    </location>
    <ligand>
        <name>Zn(2+)</name>
        <dbReference type="ChEBI" id="CHEBI:29105"/>
        <note>catalytic</note>
    </ligand>
</feature>
<proteinExistence type="evidence at protein level"/>
<keyword id="KW-1003">Cell membrane</keyword>
<keyword id="KW-0378">Hydrolase</keyword>
<keyword id="KW-0472">Membrane</keyword>
<keyword id="KW-0479">Metal-binding</keyword>
<keyword id="KW-0482">Metalloprotease</keyword>
<keyword id="KW-0645">Protease</keyword>
<keyword id="KW-0812">Transmembrane</keyword>
<keyword id="KW-1133">Transmembrane helix</keyword>
<keyword id="KW-0862">Zinc</keyword>